<feature type="signal peptide">
    <location>
        <begin position="1"/>
        <end position="30"/>
    </location>
</feature>
<feature type="chain" id="PRO_0000001453" description="Beta-amylase">
    <location>
        <begin position="31"/>
        <end position="546"/>
    </location>
</feature>
<feature type="domain" description="CBM20" evidence="2">
    <location>
        <begin position="444"/>
        <end position="546"/>
    </location>
</feature>
<feature type="active site" description="Proton donor" evidence="3 4 5">
    <location>
        <position position="202"/>
    </location>
</feature>
<feature type="active site" description="Proton acceptor" evidence="4 5">
    <location>
        <position position="397"/>
    </location>
</feature>
<feature type="binding site" evidence="4 5">
    <location>
        <position position="79"/>
    </location>
    <ligand>
        <name>substrate</name>
    </ligand>
</feature>
<feature type="binding site" evidence="4">
    <location>
        <position position="86"/>
    </location>
    <ligand>
        <name>Ca(2+)</name>
        <dbReference type="ChEBI" id="CHEBI:29108"/>
    </ligand>
</feature>
<feature type="binding site" evidence="4">
    <location>
        <position position="90"/>
    </location>
    <ligand>
        <name>Ca(2+)</name>
        <dbReference type="ChEBI" id="CHEBI:29108"/>
    </ligand>
</feature>
<feature type="binding site" evidence="4">
    <location>
        <position position="91"/>
    </location>
    <ligand>
        <name>Ca(2+)</name>
        <dbReference type="ChEBI" id="CHEBI:29108"/>
    </ligand>
</feature>
<feature type="binding site" evidence="4 5">
    <location>
        <position position="119"/>
    </location>
    <ligand>
        <name>substrate</name>
    </ligand>
</feature>
<feature type="binding site" evidence="4 5">
    <location>
        <position position="127"/>
    </location>
    <ligand>
        <name>substrate</name>
    </ligand>
</feature>
<feature type="binding site" evidence="4">
    <location>
        <position position="171"/>
    </location>
    <ligand>
        <name>Ca(2+)</name>
        <dbReference type="ChEBI" id="CHEBI:29108"/>
    </ligand>
</feature>
<feature type="binding site" evidence="4">
    <location>
        <position position="174"/>
    </location>
    <ligand>
        <name>Ca(2+)</name>
        <dbReference type="ChEBI" id="CHEBI:29108"/>
    </ligand>
</feature>
<feature type="binding site" evidence="4 5">
    <location>
        <position position="317"/>
    </location>
    <ligand>
        <name>substrate</name>
    </ligand>
</feature>
<feature type="binding site" evidence="4 5">
    <location>
        <position position="322"/>
    </location>
    <ligand>
        <name>substrate</name>
    </ligand>
</feature>
<feature type="binding site" evidence="4 5">
    <location>
        <position position="360"/>
    </location>
    <ligand>
        <name>substrate</name>
    </ligand>
</feature>
<feature type="binding site" evidence="4">
    <location>
        <begin position="398"/>
        <end position="399"/>
    </location>
    <ligand>
        <name>substrate</name>
    </ligand>
</feature>
<feature type="binding site" evidence="4 5">
    <location>
        <position position="427"/>
    </location>
    <ligand>
        <name>substrate</name>
    </ligand>
</feature>
<feature type="disulfide bond" evidence="6">
    <location>
        <begin position="121"/>
        <end position="129"/>
    </location>
</feature>
<feature type="mutagenesis site" description="Reduces activity by 60%." evidence="6">
    <original>Y</original>
    <variation>E</variation>
    <location>
        <position position="194"/>
    </location>
</feature>
<feature type="mutagenesis site" description="Reduces activity by 64%." evidence="6">
    <original>Y</original>
    <variation>F</variation>
    <location>
        <position position="194"/>
    </location>
</feature>
<feature type="mutagenesis site" description="Reduces activity by 97%." evidence="6">
    <original>Y</original>
    <variation>H</variation>
    <location>
        <position position="194"/>
    </location>
</feature>
<feature type="mutagenesis site" description="Reduces activity by 80%." evidence="6">
    <original>Y</original>
    <variation>Q</variation>
    <location>
        <position position="194"/>
    </location>
</feature>
<feature type="helix" evidence="9">
    <location>
        <begin position="32"/>
        <end position="34"/>
    </location>
</feature>
<feature type="strand" evidence="9">
    <location>
        <begin position="42"/>
        <end position="46"/>
    </location>
</feature>
<feature type="helix" evidence="9">
    <location>
        <begin position="52"/>
        <end position="54"/>
    </location>
</feature>
<feature type="helix" evidence="9">
    <location>
        <begin position="58"/>
        <end position="70"/>
    </location>
</feature>
<feature type="strand" evidence="9">
    <location>
        <begin position="73"/>
        <end position="81"/>
    </location>
</feature>
<feature type="helix" evidence="9">
    <location>
        <begin position="82"/>
        <end position="85"/>
    </location>
</feature>
<feature type="helix" evidence="9">
    <location>
        <begin position="96"/>
        <end position="107"/>
    </location>
</feature>
<feature type="strand" evidence="9">
    <location>
        <begin position="111"/>
        <end position="117"/>
    </location>
</feature>
<feature type="strand" evidence="9">
    <location>
        <begin position="121"/>
        <end position="124"/>
    </location>
</feature>
<feature type="helix" evidence="9">
    <location>
        <begin position="135"/>
        <end position="140"/>
    </location>
</feature>
<feature type="strand" evidence="9">
    <location>
        <begin position="142"/>
        <end position="144"/>
    </location>
</feature>
<feature type="strand" evidence="9">
    <location>
        <begin position="147"/>
        <end position="149"/>
    </location>
</feature>
<feature type="helix" evidence="9">
    <location>
        <begin position="165"/>
        <end position="183"/>
    </location>
</feature>
<feature type="helix" evidence="9">
    <location>
        <begin position="184"/>
        <end position="189"/>
    </location>
</feature>
<feature type="strand" evidence="9">
    <location>
        <begin position="193"/>
        <end position="195"/>
    </location>
</feature>
<feature type="helix" evidence="9">
    <location>
        <begin position="199"/>
        <end position="201"/>
    </location>
</feature>
<feature type="strand" evidence="9">
    <location>
        <begin position="202"/>
        <end position="204"/>
    </location>
</feature>
<feature type="turn" evidence="9">
    <location>
        <begin position="210"/>
        <end position="213"/>
    </location>
</feature>
<feature type="helix" evidence="9">
    <location>
        <begin position="227"/>
        <end position="241"/>
    </location>
</feature>
<feature type="helix" evidence="9">
    <location>
        <begin position="244"/>
        <end position="251"/>
    </location>
</feature>
<feature type="helix" evidence="9">
    <location>
        <begin position="258"/>
        <end position="260"/>
    </location>
</feature>
<feature type="helix" evidence="9">
    <location>
        <begin position="267"/>
        <end position="272"/>
    </location>
</feature>
<feature type="helix" evidence="9">
    <location>
        <begin position="274"/>
        <end position="276"/>
    </location>
</feature>
<feature type="helix" evidence="9">
    <location>
        <begin position="278"/>
        <end position="306"/>
    </location>
</feature>
<feature type="turn" evidence="9">
    <location>
        <begin position="307"/>
        <end position="310"/>
    </location>
</feature>
<feature type="strand" evidence="9">
    <location>
        <begin position="314"/>
        <end position="318"/>
    </location>
</feature>
<feature type="turn" evidence="8">
    <location>
        <begin position="323"/>
        <end position="326"/>
    </location>
</feature>
<feature type="strand" evidence="9">
    <location>
        <begin position="328"/>
        <end position="330"/>
    </location>
</feature>
<feature type="turn" evidence="9">
    <location>
        <begin position="331"/>
        <end position="334"/>
    </location>
</feature>
<feature type="helix" evidence="9">
    <location>
        <begin position="335"/>
        <end position="338"/>
    </location>
</feature>
<feature type="helix" evidence="9">
    <location>
        <begin position="343"/>
        <end position="352"/>
    </location>
</feature>
<feature type="strand" evidence="9">
    <location>
        <begin position="356"/>
        <end position="359"/>
    </location>
</feature>
<feature type="turn" evidence="9">
    <location>
        <begin position="370"/>
        <end position="372"/>
    </location>
</feature>
<feature type="helix" evidence="9">
    <location>
        <begin position="376"/>
        <end position="390"/>
    </location>
</feature>
<feature type="strand" evidence="9">
    <location>
        <begin position="394"/>
        <end position="397"/>
    </location>
</feature>
<feature type="helix" evidence="9">
    <location>
        <begin position="405"/>
        <end position="417"/>
    </location>
</feature>
<feature type="strand" evidence="9">
    <location>
        <begin position="421"/>
        <end position="426"/>
    </location>
</feature>
<feature type="helix" evidence="9">
    <location>
        <begin position="429"/>
        <end position="432"/>
    </location>
</feature>
<feature type="helix" evidence="9">
    <location>
        <begin position="435"/>
        <end position="444"/>
    </location>
</feature>
<feature type="strand" evidence="9">
    <location>
        <begin position="449"/>
        <end position="458"/>
    </location>
</feature>
<feature type="strand" evidence="9">
    <location>
        <begin position="466"/>
        <end position="473"/>
    </location>
</feature>
<feature type="helix" evidence="9">
    <location>
        <begin position="474"/>
        <end position="476"/>
    </location>
</feature>
<feature type="turn" evidence="9">
    <location>
        <begin position="477"/>
        <end position="479"/>
    </location>
</feature>
<feature type="turn" evidence="9">
    <location>
        <begin position="481"/>
        <end position="483"/>
    </location>
</feature>
<feature type="strand" evidence="9">
    <location>
        <begin position="486"/>
        <end position="491"/>
    </location>
</feature>
<feature type="turn" evidence="9">
    <location>
        <begin position="492"/>
        <end position="495"/>
    </location>
</feature>
<feature type="strand" evidence="9">
    <location>
        <begin position="496"/>
        <end position="504"/>
    </location>
</feature>
<feature type="strand" evidence="9">
    <location>
        <begin position="509"/>
        <end position="516"/>
    </location>
</feature>
<feature type="strand" evidence="9">
    <location>
        <begin position="522"/>
        <end position="525"/>
    </location>
</feature>
<feature type="strand" evidence="9">
    <location>
        <begin position="530"/>
        <end position="532"/>
    </location>
</feature>
<feature type="strand" evidence="9">
    <location>
        <begin position="541"/>
        <end position="545"/>
    </location>
</feature>
<keyword id="KW-0002">3D-structure</keyword>
<keyword id="KW-0106">Calcium</keyword>
<keyword id="KW-0119">Carbohydrate metabolism</keyword>
<keyword id="KW-0903">Direct protein sequencing</keyword>
<keyword id="KW-1015">Disulfide bond</keyword>
<keyword id="KW-0326">Glycosidase</keyword>
<keyword id="KW-0378">Hydrolase</keyword>
<keyword id="KW-0479">Metal-binding</keyword>
<keyword id="KW-0624">Polysaccharide degradation</keyword>
<keyword id="KW-0732">Signal</keyword>
<proteinExistence type="evidence at protein level"/>
<accession>P36924</accession>
<dbReference type="EC" id="3.2.1.2"/>
<dbReference type="EMBL" id="AB024519">
    <property type="protein sequence ID" value="BAA75890.1"/>
    <property type="molecule type" value="Genomic_DNA"/>
</dbReference>
<dbReference type="PDB" id="1B90">
    <property type="method" value="X-ray"/>
    <property type="resolution" value="2.50 A"/>
    <property type="chains" value="A=31-546"/>
</dbReference>
<dbReference type="PDB" id="1B9Z">
    <property type="method" value="X-ray"/>
    <property type="resolution" value="2.10 A"/>
    <property type="chains" value="A=31-546"/>
</dbReference>
<dbReference type="PDB" id="1CQY">
    <property type="method" value="X-ray"/>
    <property type="resolution" value="1.95 A"/>
    <property type="chains" value="A=448-546"/>
</dbReference>
<dbReference type="PDB" id="1ITC">
    <property type="method" value="X-ray"/>
    <property type="resolution" value="2.10 A"/>
    <property type="chains" value="A=31-546"/>
</dbReference>
<dbReference type="PDB" id="1J0Y">
    <property type="method" value="X-ray"/>
    <property type="resolution" value="2.10 A"/>
    <property type="chains" value="A/B/C/D=31-546"/>
</dbReference>
<dbReference type="PDB" id="1J0Z">
    <property type="method" value="X-ray"/>
    <property type="resolution" value="2.20 A"/>
    <property type="chains" value="A/B/C/D=31-546"/>
</dbReference>
<dbReference type="PDB" id="1J10">
    <property type="method" value="X-ray"/>
    <property type="resolution" value="2.10 A"/>
    <property type="chains" value="A/B/C/D=31-546"/>
</dbReference>
<dbReference type="PDB" id="1J11">
    <property type="method" value="X-ray"/>
    <property type="resolution" value="2.00 A"/>
    <property type="chains" value="A/B/C/D=31-546"/>
</dbReference>
<dbReference type="PDB" id="1J12">
    <property type="method" value="X-ray"/>
    <property type="resolution" value="2.10 A"/>
    <property type="chains" value="A/B/C/D=31-546"/>
</dbReference>
<dbReference type="PDB" id="1J18">
    <property type="method" value="X-ray"/>
    <property type="resolution" value="2.00 A"/>
    <property type="chains" value="A=31-546"/>
</dbReference>
<dbReference type="PDB" id="1VEM">
    <property type="method" value="X-ray"/>
    <property type="resolution" value="1.85 A"/>
    <property type="chains" value="A=31-546"/>
</dbReference>
<dbReference type="PDB" id="1VEN">
    <property type="method" value="X-ray"/>
    <property type="resolution" value="2.02 A"/>
    <property type="chains" value="A=31-546"/>
</dbReference>
<dbReference type="PDB" id="1VEO">
    <property type="method" value="X-ray"/>
    <property type="resolution" value="2.12 A"/>
    <property type="chains" value="A=31-546"/>
</dbReference>
<dbReference type="PDB" id="1VEP">
    <property type="method" value="X-ray"/>
    <property type="resolution" value="2.06 A"/>
    <property type="chains" value="A=31-546"/>
</dbReference>
<dbReference type="PDB" id="5BCA">
    <property type="method" value="X-ray"/>
    <property type="resolution" value="2.20 A"/>
    <property type="chains" value="A/B/C/D=31-546"/>
</dbReference>
<dbReference type="PDB" id="8ZRZ">
    <property type="method" value="X-ray"/>
    <property type="resolution" value="1.26 A"/>
    <property type="chains" value="A=31-546"/>
</dbReference>
<dbReference type="PDBsum" id="1B90"/>
<dbReference type="PDBsum" id="1B9Z"/>
<dbReference type="PDBsum" id="1CQY"/>
<dbReference type="PDBsum" id="1ITC"/>
<dbReference type="PDBsum" id="1J0Y"/>
<dbReference type="PDBsum" id="1J0Z"/>
<dbReference type="PDBsum" id="1J10"/>
<dbReference type="PDBsum" id="1J11"/>
<dbReference type="PDBsum" id="1J12"/>
<dbReference type="PDBsum" id="1J18"/>
<dbReference type="PDBsum" id="1VEM"/>
<dbReference type="PDBsum" id="1VEN"/>
<dbReference type="PDBsum" id="1VEO"/>
<dbReference type="PDBsum" id="1VEP"/>
<dbReference type="PDBsum" id="5BCA"/>
<dbReference type="PDBsum" id="8ZRZ"/>
<dbReference type="SMR" id="P36924"/>
<dbReference type="DrugBank" id="DB02645">
    <property type="generic name" value="3,4-Epoxybutyl-Alpha-D-Glucopyranoside"/>
</dbReference>
<dbReference type="DrugBank" id="DB03389">
    <property type="generic name" value="alpha-D-Xylopyranose"/>
</dbReference>
<dbReference type="DrugBank" id="DB02379">
    <property type="generic name" value="Beta-D-Glucose"/>
</dbReference>
<dbReference type="DrugBank" id="DB03323">
    <property type="generic name" value="Maltose"/>
</dbReference>
<dbReference type="CAZy" id="CBM20">
    <property type="family name" value="Carbohydrate-Binding Module Family 20"/>
</dbReference>
<dbReference type="CAZy" id="GH14">
    <property type="family name" value="Glycoside Hydrolase Family 14"/>
</dbReference>
<dbReference type="BRENDA" id="3.2.1.2">
    <property type="organism ID" value="648"/>
</dbReference>
<dbReference type="EvolutionaryTrace" id="P36924"/>
<dbReference type="GO" id="GO:0016161">
    <property type="term" value="F:beta-amylase activity"/>
    <property type="evidence" value="ECO:0007669"/>
    <property type="project" value="UniProtKB-EC"/>
</dbReference>
<dbReference type="GO" id="GO:0046872">
    <property type="term" value="F:metal ion binding"/>
    <property type="evidence" value="ECO:0007669"/>
    <property type="project" value="UniProtKB-KW"/>
</dbReference>
<dbReference type="GO" id="GO:2001070">
    <property type="term" value="F:starch binding"/>
    <property type="evidence" value="ECO:0007669"/>
    <property type="project" value="InterPro"/>
</dbReference>
<dbReference type="GO" id="GO:0000272">
    <property type="term" value="P:polysaccharide catabolic process"/>
    <property type="evidence" value="ECO:0007669"/>
    <property type="project" value="UniProtKB-KW"/>
</dbReference>
<dbReference type="CDD" id="cd05809">
    <property type="entry name" value="CBM20_beta_amylase"/>
    <property type="match status" value="1"/>
</dbReference>
<dbReference type="Gene3D" id="3.20.20.80">
    <property type="entry name" value="Glycosidases"/>
    <property type="match status" value="1"/>
</dbReference>
<dbReference type="Gene3D" id="2.60.40.10">
    <property type="entry name" value="Immunoglobulins"/>
    <property type="match status" value="1"/>
</dbReference>
<dbReference type="InterPro" id="IPR002044">
    <property type="entry name" value="CBM20"/>
</dbReference>
<dbReference type="InterPro" id="IPR034835">
    <property type="entry name" value="CBM20_beta_amylase"/>
</dbReference>
<dbReference type="InterPro" id="IPR001554">
    <property type="entry name" value="Glyco_hydro_14"/>
</dbReference>
<dbReference type="InterPro" id="IPR018238">
    <property type="entry name" value="Glyco_hydro_14_CS"/>
</dbReference>
<dbReference type="InterPro" id="IPR000125">
    <property type="entry name" value="Glyco_hydro_14A_bac"/>
</dbReference>
<dbReference type="InterPro" id="IPR017853">
    <property type="entry name" value="Glycoside_hydrolase_SF"/>
</dbReference>
<dbReference type="InterPro" id="IPR013783">
    <property type="entry name" value="Ig-like_fold"/>
</dbReference>
<dbReference type="PANTHER" id="PTHR31352">
    <property type="entry name" value="BETA-AMYLASE 1, CHLOROPLASTIC"/>
    <property type="match status" value="1"/>
</dbReference>
<dbReference type="PANTHER" id="PTHR31352:SF1">
    <property type="entry name" value="BETA-AMYLASE 3, CHLOROPLASTIC"/>
    <property type="match status" value="1"/>
</dbReference>
<dbReference type="Pfam" id="PF00686">
    <property type="entry name" value="CBM_20"/>
    <property type="match status" value="1"/>
</dbReference>
<dbReference type="Pfam" id="PF01373">
    <property type="entry name" value="Glyco_hydro_14"/>
    <property type="match status" value="1"/>
</dbReference>
<dbReference type="PRINTS" id="PR00750">
    <property type="entry name" value="BETAAMYLASE"/>
</dbReference>
<dbReference type="PRINTS" id="PR00841">
    <property type="entry name" value="GLHYDLASE14A"/>
</dbReference>
<dbReference type="SMART" id="SM01065">
    <property type="entry name" value="CBM_2"/>
    <property type="match status" value="1"/>
</dbReference>
<dbReference type="SUPFAM" id="SSF51445">
    <property type="entry name" value="(Trans)glycosidases"/>
    <property type="match status" value="1"/>
</dbReference>
<dbReference type="PROSITE" id="PS00506">
    <property type="entry name" value="BETA_AMYLASE_1"/>
    <property type="match status" value="1"/>
</dbReference>
<dbReference type="PROSITE" id="PS00679">
    <property type="entry name" value="BETA_AMYLASE_2"/>
    <property type="match status" value="1"/>
</dbReference>
<dbReference type="PROSITE" id="PS51166">
    <property type="entry name" value="CBM20"/>
    <property type="match status" value="1"/>
</dbReference>
<reference key="1">
    <citation type="journal article" date="1993" name="Appl. Environ. Microbiol.">
        <title>Cloning of the beta-amylase gene from Bacillus cereus and characteristics of the primary structure of the enzyme.</title>
        <authorList>
            <person name="Nanmori T."/>
            <person name="Nagai M."/>
            <person name="Shimizu Y."/>
            <person name="Shinke R."/>
            <person name="Mikami B."/>
        </authorList>
    </citation>
    <scope>NUCLEOTIDE SEQUENCE [GENOMIC DNA]</scope>
    <scope>PARTIAL PROTEIN SEQUENCE</scope>
    <source>
        <strain>BQ10-S1</strain>
    </source>
</reference>
<reference key="2">
    <citation type="submission" date="1999-03" db="EMBL/GenBank/DDBJ databases">
        <authorList>
            <person name="Nanmori T."/>
            <person name="Mikami B."/>
            <person name="Shimizu Y."/>
        </authorList>
    </citation>
    <scope>SEQUENCE REVISION</scope>
</reference>
<reference key="3">
    <citation type="journal article" date="1999" name="Biochemistry">
        <title>Structure of raw starch-digesting Bacillus cereus beta-amylase complexed with maltose.</title>
        <authorList>
            <person name="Mikami B."/>
            <person name="Adachi M."/>
            <person name="Kage T."/>
            <person name="Sarikaya E."/>
            <person name="Nanmori T."/>
            <person name="Shinke R."/>
            <person name="Utsumi S."/>
        </authorList>
    </citation>
    <scope>X-RAY CRYSTALLOGRAPHY (2.5 ANGSTROMS)</scope>
    <scope>ACTIVE SITE</scope>
    <scope>SUBSTRATE-BINDING</scope>
    <scope>METAL-BINDING</scope>
    <scope>COFACTOR</scope>
</reference>
<reference key="4">
    <citation type="journal article" date="2003" name="J. Biochem.">
        <title>Crystal structures of beta-amylase from Bacillus cereus var mycoides in complexes with substrate analogs and affinity-labeling reagents.</title>
        <authorList>
            <person name="Oyama T."/>
            <person name="Miyake H."/>
            <person name="Kusunoki M."/>
            <person name="Nitta Y."/>
        </authorList>
    </citation>
    <scope>X-RAY CRYSTALLOGRAPHY (2.0 ANGSTROMS) OF 31-546 IN COMPLEXES WITH SUBSTRATE ANALOGS</scope>
    <scope>ACTIVE SITE</scope>
    <scope>SUBSTRATE-BINDING</scope>
</reference>
<reference key="5">
    <citation type="journal article" date="2004" name="Biochemistry">
        <title>Engineering of the pH optimum of Bacillus cereus beta-amylase: conversion of the pH optimum from a bacterial type to a higher-plant type.</title>
        <authorList>
            <person name="Hirata A."/>
            <person name="Adachi M."/>
            <person name="Utsumi S."/>
            <person name="Mikami B."/>
        </authorList>
    </citation>
    <scope>X-RAY CRYSTALLOGRAPHY (1.85 ANGSTROMS) OF 31-546 IN COMPLEX WITH CALCIUM IONS AND MALTOSE</scope>
    <scope>MUTAGENESIS OF TYR-194</scope>
    <scope>DISULFIDE BOND</scope>
</reference>
<sequence length="546" mass="61629">MKNQFQYCCIVILSVVMLFVSLLIPQASSAAVNGKGMNPDYKAYLMAPLKKIPEVTNWETFENDLRWAKQNGFYAITVDFWWGDMEKNGDQQFDFSYAQRFAQSVKNAGMKMIPIISTHQCGGNVGDDCNVPIPSWVWNQKSDDSLYFKSETGTVNKETLNPLASDVIRKEYGELYTAFAAAMKPYKDVIAKIYLSGGPAGELRYPSYTTSDGTGYPSRGKFQAYTEFAKSKFRLWVLNKYGSLNEVNKAWGTKLISELAILPPSDGEQFLMNGYLSMYGKDYLEWYQGILENHTKLIGELAHNAFDTTFQVPIGAKIAGVHWQYNNPTIPHGAEKPAGYNDYSHLLDAFKSAKLDVTFTCLEMTDKGSYPEYSMPKTLVQNIATLANEKGIVLNGENALSIGNEEEYKRVAEMAFNYNFAGFTLLRYQDVMYNNSLMGKFKDLLGVTPVMQTIVVKNVPTTIGDTVYITGNRAELGSWDTKQYPIQLYYDSHSNDWRGNVVLPAERNIEFKAFIKSKDGTVKSWQTIQQSWNPVPLKTTSHTSSW</sequence>
<comment type="catalytic activity">
    <reaction>
        <text>Hydrolysis of (1-&gt;4)-alpha-D-glucosidic linkages in polysaccharides so as to remove successive maltose units from the non-reducing ends of the chains.</text>
        <dbReference type="EC" id="3.2.1.2"/>
    </reaction>
</comment>
<comment type="cofactor">
    <cofactor evidence="4">
        <name>Ca(2+)</name>
        <dbReference type="ChEBI" id="CHEBI:29108"/>
    </cofactor>
    <text evidence="4">Binds 1 Ca(2+) ion per subunit.</text>
</comment>
<comment type="subunit">
    <text evidence="1">Monomer.</text>
</comment>
<comment type="similarity">
    <text evidence="7">Belongs to the glycosyl hydrolase 14 family.</text>
</comment>
<name>AMYB_BACCE</name>
<gene>
    <name type="primary">spoII</name>
</gene>
<evidence type="ECO:0000250" key="1"/>
<evidence type="ECO:0000255" key="2">
    <source>
        <dbReference type="PROSITE-ProRule" id="PRU00594"/>
    </source>
</evidence>
<evidence type="ECO:0000255" key="3">
    <source>
        <dbReference type="PROSITE-ProRule" id="PRU10050"/>
    </source>
</evidence>
<evidence type="ECO:0000269" key="4">
    <source>
    </source>
</evidence>
<evidence type="ECO:0000269" key="5">
    <source>
    </source>
</evidence>
<evidence type="ECO:0000269" key="6">
    <source>
    </source>
</evidence>
<evidence type="ECO:0000305" key="7"/>
<evidence type="ECO:0007829" key="8">
    <source>
        <dbReference type="PDB" id="1VEN"/>
    </source>
</evidence>
<evidence type="ECO:0007829" key="9">
    <source>
        <dbReference type="PDB" id="8ZRZ"/>
    </source>
</evidence>
<protein>
    <recommendedName>
        <fullName>Beta-amylase</fullName>
        <ecNumber>3.2.1.2</ecNumber>
    </recommendedName>
    <alternativeName>
        <fullName>1,4-alpha-D-glucan maltohydrolase</fullName>
    </alternativeName>
</protein>
<organism>
    <name type="scientific">Bacillus cereus</name>
    <dbReference type="NCBI Taxonomy" id="1396"/>
    <lineage>
        <taxon>Bacteria</taxon>
        <taxon>Bacillati</taxon>
        <taxon>Bacillota</taxon>
        <taxon>Bacilli</taxon>
        <taxon>Bacillales</taxon>
        <taxon>Bacillaceae</taxon>
        <taxon>Bacillus</taxon>
        <taxon>Bacillus cereus group</taxon>
    </lineage>
</organism>